<sequence>MGLCFSSAAKSSGHNRSSRNPHPHPPLTVVKSRPPRSPCSFMAVTIQKDHRTQPRRNATAKKTPTRHTPPHGKVREKVISNNGRRHGETIPYGKRVDFGYAKDFDHRYTIGKLLGHGQFGYTYVATDKKTGDRVAVKKIDKAKMTIPIAVEDVKREVKILQALTGHENVVRFYNAFEDKNSVYIVMELCEGGELLDRILARKDSRYSERDAAVVVRQMLKVAAECHLRGLVHRDMKPENFLFKSTEEDSPLKATDFGLSDFIKPGKKFHDIVGSAYYVAPEVLKRRSGPESDVWSIGVISYILLCGRRPFWDKTEDGIFKEVLKNKPDFRRKPWPTISNSAKDFVKKLLVKDPRARLTAAQALSHPWVREGGDASEIPIDISVLNNMRQFVKFSRLKQFALRALATTLDEEELADLRDQFDAIDVDKNGVISLEEMRQALAKDHPWKLKDARVAEILQAIDSNTDGFVDFGEFVAAALHVNQLEEHDSEKWQQRSRAAFEKFDIDGDGFITAEELRMHTGLKGSIEPLLEEADIDNDGKISLQEFRRLLRTASIKSRNVRSPPGYLISRKV</sequence>
<reference key="1">
    <citation type="journal article" date="1999" name="Nature">
        <title>Sequence and analysis of chromosome 2 of the plant Arabidopsis thaliana.</title>
        <authorList>
            <person name="Lin X."/>
            <person name="Kaul S."/>
            <person name="Rounsley S.D."/>
            <person name="Shea T.P."/>
            <person name="Benito M.-I."/>
            <person name="Town C.D."/>
            <person name="Fujii C.Y."/>
            <person name="Mason T.M."/>
            <person name="Bowman C.L."/>
            <person name="Barnstead M.E."/>
            <person name="Feldblyum T.V."/>
            <person name="Buell C.R."/>
            <person name="Ketchum K.A."/>
            <person name="Lee J.J."/>
            <person name="Ronning C.M."/>
            <person name="Koo H.L."/>
            <person name="Moffat K.S."/>
            <person name="Cronin L.A."/>
            <person name="Shen M."/>
            <person name="Pai G."/>
            <person name="Van Aken S."/>
            <person name="Umayam L."/>
            <person name="Tallon L.J."/>
            <person name="Gill J.E."/>
            <person name="Adams M.D."/>
            <person name="Carrera A.J."/>
            <person name="Creasy T.H."/>
            <person name="Goodman H.M."/>
            <person name="Somerville C.R."/>
            <person name="Copenhaver G.P."/>
            <person name="Preuss D."/>
            <person name="Nierman W.C."/>
            <person name="White O."/>
            <person name="Eisen J.A."/>
            <person name="Salzberg S.L."/>
            <person name="Fraser C.M."/>
            <person name="Venter J.C."/>
        </authorList>
    </citation>
    <scope>NUCLEOTIDE SEQUENCE [LARGE SCALE GENOMIC DNA]</scope>
    <source>
        <strain>cv. Columbia</strain>
    </source>
</reference>
<reference key="2">
    <citation type="journal article" date="2017" name="Plant J.">
        <title>Araport11: a complete reannotation of the Arabidopsis thaliana reference genome.</title>
        <authorList>
            <person name="Cheng C.Y."/>
            <person name="Krishnakumar V."/>
            <person name="Chan A.P."/>
            <person name="Thibaud-Nissen F."/>
            <person name="Schobel S."/>
            <person name="Town C.D."/>
        </authorList>
    </citation>
    <scope>GENOME REANNOTATION</scope>
    <source>
        <strain>cv. Columbia</strain>
    </source>
</reference>
<reference key="3">
    <citation type="journal article" date="2001" name="New Phytol.">
        <title>The CDPK superfamily of protein kinases.</title>
        <authorList>
            <person name="Harmon A.C."/>
            <person name="Gribskov M."/>
            <person name="Gubrium E."/>
            <person name="Harper J.F."/>
        </authorList>
    </citation>
    <scope>GENE FAMILY</scope>
    <scope>NOMENCLATURE</scope>
</reference>
<reference key="4">
    <citation type="journal article" date="2002" name="Plant Physiol.">
        <title>Calcium signaling through protein kinases. The Arabidopsis calcium-dependent protein kinase gene family.</title>
        <authorList>
            <person name="Cheng S.-H."/>
            <person name="Willmann M.R."/>
            <person name="Chen H.-C."/>
            <person name="Sheen J."/>
        </authorList>
    </citation>
    <scope>GENE FAMILY</scope>
    <scope>NOMENCLATURE</scope>
</reference>
<reference key="5">
    <citation type="journal article" date="2003" name="Plant Physiol.">
        <title>The Arabidopsis CDPK-SnRK superfamily of protein kinases.</title>
        <authorList>
            <person name="Hrabak E.M."/>
            <person name="Chan C.W.M."/>
            <person name="Gribskov M."/>
            <person name="Harper J.F."/>
            <person name="Choi J.H."/>
            <person name="Halford N."/>
            <person name="Kudla J."/>
            <person name="Luan S."/>
            <person name="Nimmo H.G."/>
            <person name="Sussman M.R."/>
            <person name="Thomas M."/>
            <person name="Walker-Simmons K."/>
            <person name="Zhu J.-K."/>
            <person name="Harmon A.C."/>
        </authorList>
    </citation>
    <scope>GENE FAMILY</scope>
    <scope>NOMENCLATURE</scope>
</reference>
<reference key="6">
    <citation type="journal article" date="2003" name="Plant Physiol.">
        <title>Subcellular targeting of nine calcium-dependent protein kinase isoforms from Arabidopsis.</title>
        <authorList>
            <person name="Dammann C."/>
            <person name="Ichida A."/>
            <person name="Hong B."/>
            <person name="Romanowsky S.M."/>
            <person name="Hrabak E.M."/>
            <person name="Harmon A.C."/>
            <person name="Pickard B.G."/>
            <person name="Harper J.F."/>
        </authorList>
    </citation>
    <scope>SUBCELLULAR LOCATION</scope>
</reference>
<reference key="7">
    <citation type="journal article" date="2011" name="FEBS Lett.">
        <title>Protein N-acylation overrides differing targeting signals.</title>
        <authorList>
            <person name="Stael S."/>
            <person name="Bayer R.G."/>
            <person name="Mehlmer N."/>
            <person name="Teige M."/>
        </authorList>
    </citation>
    <scope>SUBCELLULAR LOCATION</scope>
    <scope>MYRISTOYLATION AT GLY-2</scope>
    <scope>PALMITOYLATION AT CYS-4</scope>
    <scope>MUTAGENESIS OF GLY-2 AND CYS-4</scope>
</reference>
<evidence type="ECO:0000250" key="1"/>
<evidence type="ECO:0000250" key="2">
    <source>
        <dbReference type="UniProtKB" id="Q9FKW4"/>
    </source>
</evidence>
<evidence type="ECO:0000255" key="3">
    <source>
        <dbReference type="PROSITE-ProRule" id="PRU00159"/>
    </source>
</evidence>
<evidence type="ECO:0000255" key="4">
    <source>
        <dbReference type="PROSITE-ProRule" id="PRU00448"/>
    </source>
</evidence>
<evidence type="ECO:0000256" key="5">
    <source>
        <dbReference type="SAM" id="MobiDB-lite"/>
    </source>
</evidence>
<evidence type="ECO:0000269" key="6">
    <source>
    </source>
</evidence>
<evidence type="ECO:0000269" key="7">
    <source>
    </source>
</evidence>
<evidence type="ECO:0000305" key="8"/>
<evidence type="ECO:0000305" key="9">
    <source>
    </source>
</evidence>
<protein>
    <recommendedName>
        <fullName>Calcium-dependent protein kinase 16</fullName>
        <ecNumber>2.7.11.1</ecNumber>
    </recommendedName>
</protein>
<feature type="initiator methionine" description="Removed" evidence="8">
    <location>
        <position position="1"/>
    </location>
</feature>
<feature type="chain" id="PRO_0000363338" description="Calcium-dependent protein kinase 16">
    <location>
        <begin position="2"/>
        <end position="571"/>
    </location>
</feature>
<feature type="domain" description="Protein kinase" evidence="3">
    <location>
        <begin position="108"/>
        <end position="368"/>
    </location>
</feature>
<feature type="domain" description="EF-hand 1" evidence="4">
    <location>
        <begin position="411"/>
        <end position="446"/>
    </location>
</feature>
<feature type="domain" description="EF-hand 2" evidence="4">
    <location>
        <begin position="448"/>
        <end position="483"/>
    </location>
</feature>
<feature type="domain" description="EF-hand 3" evidence="4">
    <location>
        <begin position="490"/>
        <end position="525"/>
    </location>
</feature>
<feature type="domain" description="EF-hand 4" evidence="4">
    <location>
        <begin position="528"/>
        <end position="555"/>
    </location>
</feature>
<feature type="region of interest" description="Disordered" evidence="5">
    <location>
        <begin position="1"/>
        <end position="74"/>
    </location>
</feature>
<feature type="region of interest" description="Autoinhibitory domain" evidence="1">
    <location>
        <begin position="374"/>
        <end position="404"/>
    </location>
</feature>
<feature type="compositionally biased region" description="Basic residues" evidence="5">
    <location>
        <begin position="63"/>
        <end position="72"/>
    </location>
</feature>
<feature type="active site" description="Proton acceptor" evidence="3">
    <location>
        <position position="234"/>
    </location>
</feature>
<feature type="binding site" evidence="3">
    <location>
        <begin position="114"/>
        <end position="122"/>
    </location>
    <ligand>
        <name>ATP</name>
        <dbReference type="ChEBI" id="CHEBI:30616"/>
    </ligand>
</feature>
<feature type="binding site" evidence="3">
    <location>
        <position position="137"/>
    </location>
    <ligand>
        <name>ATP</name>
        <dbReference type="ChEBI" id="CHEBI:30616"/>
    </ligand>
</feature>
<feature type="binding site" evidence="4">
    <location>
        <position position="424"/>
    </location>
    <ligand>
        <name>Ca(2+)</name>
        <dbReference type="ChEBI" id="CHEBI:29108"/>
        <label>1</label>
    </ligand>
</feature>
<feature type="binding site" evidence="4">
    <location>
        <position position="426"/>
    </location>
    <ligand>
        <name>Ca(2+)</name>
        <dbReference type="ChEBI" id="CHEBI:29108"/>
        <label>1</label>
    </ligand>
</feature>
<feature type="binding site" evidence="4">
    <location>
        <position position="428"/>
    </location>
    <ligand>
        <name>Ca(2+)</name>
        <dbReference type="ChEBI" id="CHEBI:29108"/>
        <label>1</label>
    </ligand>
</feature>
<feature type="binding site" evidence="4">
    <location>
        <position position="435"/>
    </location>
    <ligand>
        <name>Ca(2+)</name>
        <dbReference type="ChEBI" id="CHEBI:29108"/>
        <label>1</label>
    </ligand>
</feature>
<feature type="binding site" evidence="4">
    <location>
        <position position="461"/>
    </location>
    <ligand>
        <name>Ca(2+)</name>
        <dbReference type="ChEBI" id="CHEBI:29108"/>
        <label>2</label>
    </ligand>
</feature>
<feature type="binding site" evidence="4">
    <location>
        <position position="463"/>
    </location>
    <ligand>
        <name>Ca(2+)</name>
        <dbReference type="ChEBI" id="CHEBI:29108"/>
        <label>2</label>
    </ligand>
</feature>
<feature type="binding site" evidence="4">
    <location>
        <position position="465"/>
    </location>
    <ligand>
        <name>Ca(2+)</name>
        <dbReference type="ChEBI" id="CHEBI:29108"/>
        <label>2</label>
    </ligand>
</feature>
<feature type="binding site" evidence="4">
    <location>
        <position position="472"/>
    </location>
    <ligand>
        <name>Ca(2+)</name>
        <dbReference type="ChEBI" id="CHEBI:29108"/>
        <label>2</label>
    </ligand>
</feature>
<feature type="binding site" evidence="4">
    <location>
        <position position="503"/>
    </location>
    <ligand>
        <name>Ca(2+)</name>
        <dbReference type="ChEBI" id="CHEBI:29108"/>
        <label>3</label>
    </ligand>
</feature>
<feature type="binding site" evidence="4">
    <location>
        <position position="505"/>
    </location>
    <ligand>
        <name>Ca(2+)</name>
        <dbReference type="ChEBI" id="CHEBI:29108"/>
        <label>3</label>
    </ligand>
</feature>
<feature type="binding site" evidence="4">
    <location>
        <position position="507"/>
    </location>
    <ligand>
        <name>Ca(2+)</name>
        <dbReference type="ChEBI" id="CHEBI:29108"/>
        <label>3</label>
    </ligand>
</feature>
<feature type="binding site" evidence="4">
    <location>
        <position position="514"/>
    </location>
    <ligand>
        <name>Ca(2+)</name>
        <dbReference type="ChEBI" id="CHEBI:29108"/>
        <label>3</label>
    </ligand>
</feature>
<feature type="binding site" evidence="4">
    <location>
        <position position="533"/>
    </location>
    <ligand>
        <name>Ca(2+)</name>
        <dbReference type="ChEBI" id="CHEBI:29108"/>
        <label>4</label>
    </ligand>
</feature>
<feature type="binding site" evidence="4">
    <location>
        <position position="535"/>
    </location>
    <ligand>
        <name>Ca(2+)</name>
        <dbReference type="ChEBI" id="CHEBI:29108"/>
        <label>4</label>
    </ligand>
</feature>
<feature type="binding site" evidence="4">
    <location>
        <position position="537"/>
    </location>
    <ligand>
        <name>Ca(2+)</name>
        <dbReference type="ChEBI" id="CHEBI:29108"/>
        <label>4</label>
    </ligand>
</feature>
<feature type="binding site" evidence="4">
    <location>
        <position position="539"/>
    </location>
    <ligand>
        <name>Ca(2+)</name>
        <dbReference type="ChEBI" id="CHEBI:29108"/>
        <label>4</label>
    </ligand>
</feature>
<feature type="binding site" evidence="4">
    <location>
        <position position="544"/>
    </location>
    <ligand>
        <name>Ca(2+)</name>
        <dbReference type="ChEBI" id="CHEBI:29108"/>
        <label>4</label>
    </ligand>
</feature>
<feature type="modified residue" description="Phosphoserine" evidence="2">
    <location>
        <position position="274"/>
    </location>
</feature>
<feature type="modified residue" description="Phosphoserine" evidence="2">
    <location>
        <position position="541"/>
    </location>
</feature>
<feature type="lipid moiety-binding region" description="N-myristoyl glycine" evidence="7">
    <location>
        <position position="2"/>
    </location>
</feature>
<feature type="lipid moiety-binding region" description="S-palmitoyl cysteine" evidence="9">
    <location>
        <position position="4"/>
    </location>
</feature>
<feature type="mutagenesis site" description="Loss of myristoylation. Loss of plasma membrane localization and relocation to nucleolus and chloroplasts." evidence="7">
    <original>G</original>
    <variation>A</variation>
    <location>
        <position position="2"/>
    </location>
</feature>
<feature type="mutagenesis site" description="Drastic reduction of plasma membrane localization and strong increase of nuclear localization." evidence="7">
    <original>C</original>
    <variation>A</variation>
    <location>
        <position position="4"/>
    </location>
</feature>
<dbReference type="EC" id="2.7.11.1"/>
<dbReference type="EMBL" id="CP002685">
    <property type="protein sequence ID" value="AEC06699.1"/>
    <property type="molecule type" value="Genomic_DNA"/>
</dbReference>
<dbReference type="PIR" id="T00835">
    <property type="entry name" value="T00835"/>
</dbReference>
<dbReference type="RefSeq" id="NP_179379.1">
    <property type="nucleotide sequence ID" value="NM_127343.2"/>
</dbReference>
<dbReference type="SMR" id="Q7XJR9"/>
<dbReference type="BioGRID" id="1656">
    <property type="interactions" value="1"/>
</dbReference>
<dbReference type="FunCoup" id="Q7XJR9">
    <property type="interactions" value="215"/>
</dbReference>
<dbReference type="STRING" id="3702.Q7XJR9"/>
<dbReference type="iPTMnet" id="Q7XJR9"/>
<dbReference type="PaxDb" id="3702-AT2G17890.1"/>
<dbReference type="ProteomicsDB" id="224390"/>
<dbReference type="EnsemblPlants" id="AT2G17890.1">
    <property type="protein sequence ID" value="AT2G17890.1"/>
    <property type="gene ID" value="AT2G17890"/>
</dbReference>
<dbReference type="GeneID" id="816299"/>
<dbReference type="Gramene" id="AT2G17890.1">
    <property type="protein sequence ID" value="AT2G17890.1"/>
    <property type="gene ID" value="AT2G17890"/>
</dbReference>
<dbReference type="KEGG" id="ath:AT2G17890"/>
<dbReference type="Araport" id="AT2G17890"/>
<dbReference type="TAIR" id="AT2G17890">
    <property type="gene designation" value="CPK16"/>
</dbReference>
<dbReference type="eggNOG" id="KOG0032">
    <property type="taxonomic scope" value="Eukaryota"/>
</dbReference>
<dbReference type="HOGENOM" id="CLU_000288_37_3_1"/>
<dbReference type="InParanoid" id="Q7XJR9"/>
<dbReference type="OMA" id="WFAMHAP"/>
<dbReference type="PhylomeDB" id="Q7XJR9"/>
<dbReference type="PRO" id="PR:Q7XJR9"/>
<dbReference type="Proteomes" id="UP000006548">
    <property type="component" value="Chromosome 2"/>
</dbReference>
<dbReference type="ExpressionAtlas" id="Q7XJR9">
    <property type="expression patterns" value="baseline and differential"/>
</dbReference>
<dbReference type="GO" id="GO:0005634">
    <property type="term" value="C:nucleus"/>
    <property type="evidence" value="ECO:0007669"/>
    <property type="project" value="UniProtKB-SubCell"/>
</dbReference>
<dbReference type="GO" id="GO:0005886">
    <property type="term" value="C:plasma membrane"/>
    <property type="evidence" value="ECO:0000314"/>
    <property type="project" value="TAIR"/>
</dbReference>
<dbReference type="GO" id="GO:0005524">
    <property type="term" value="F:ATP binding"/>
    <property type="evidence" value="ECO:0007669"/>
    <property type="project" value="UniProtKB-KW"/>
</dbReference>
<dbReference type="GO" id="GO:0005509">
    <property type="term" value="F:calcium ion binding"/>
    <property type="evidence" value="ECO:0007669"/>
    <property type="project" value="InterPro"/>
</dbReference>
<dbReference type="GO" id="GO:0004672">
    <property type="term" value="F:protein kinase activity"/>
    <property type="evidence" value="ECO:0000314"/>
    <property type="project" value="TAIR"/>
</dbReference>
<dbReference type="GO" id="GO:0106310">
    <property type="term" value="F:protein serine kinase activity"/>
    <property type="evidence" value="ECO:0007669"/>
    <property type="project" value="RHEA"/>
</dbReference>
<dbReference type="GO" id="GO:0004674">
    <property type="term" value="F:protein serine/threonine kinase activity"/>
    <property type="evidence" value="ECO:0007669"/>
    <property type="project" value="UniProtKB-KW"/>
</dbReference>
<dbReference type="GO" id="GO:0051592">
    <property type="term" value="P:response to calcium ion"/>
    <property type="evidence" value="ECO:0000270"/>
    <property type="project" value="TAIR"/>
</dbReference>
<dbReference type="CDD" id="cd05117">
    <property type="entry name" value="STKc_CAMK"/>
    <property type="match status" value="1"/>
</dbReference>
<dbReference type="FunFam" id="1.10.238.10:FF:000158">
    <property type="entry name" value="Calcium-dependent protein kinase 28"/>
    <property type="match status" value="1"/>
</dbReference>
<dbReference type="FunFam" id="1.10.510.10:FF:000225">
    <property type="entry name" value="calcium-dependent protein kinase 28-like"/>
    <property type="match status" value="1"/>
</dbReference>
<dbReference type="FunFam" id="3.30.200.20:FF:000101">
    <property type="entry name" value="CDPK-related kinase 1"/>
    <property type="match status" value="1"/>
</dbReference>
<dbReference type="Gene3D" id="1.10.238.10">
    <property type="entry name" value="EF-hand"/>
    <property type="match status" value="2"/>
</dbReference>
<dbReference type="Gene3D" id="3.30.200.20">
    <property type="entry name" value="Phosphorylase Kinase, domain 1"/>
    <property type="match status" value="1"/>
</dbReference>
<dbReference type="Gene3D" id="1.10.510.10">
    <property type="entry name" value="Transferase(Phosphotransferase) domain 1"/>
    <property type="match status" value="1"/>
</dbReference>
<dbReference type="InterPro" id="IPR050205">
    <property type="entry name" value="CDPK_Ser/Thr_kinases"/>
</dbReference>
<dbReference type="InterPro" id="IPR011992">
    <property type="entry name" value="EF-hand-dom_pair"/>
</dbReference>
<dbReference type="InterPro" id="IPR018247">
    <property type="entry name" value="EF_Hand_1_Ca_BS"/>
</dbReference>
<dbReference type="InterPro" id="IPR002048">
    <property type="entry name" value="EF_hand_dom"/>
</dbReference>
<dbReference type="InterPro" id="IPR011009">
    <property type="entry name" value="Kinase-like_dom_sf"/>
</dbReference>
<dbReference type="InterPro" id="IPR000719">
    <property type="entry name" value="Prot_kinase_dom"/>
</dbReference>
<dbReference type="InterPro" id="IPR017441">
    <property type="entry name" value="Protein_kinase_ATP_BS"/>
</dbReference>
<dbReference type="InterPro" id="IPR008271">
    <property type="entry name" value="Ser/Thr_kinase_AS"/>
</dbReference>
<dbReference type="PANTHER" id="PTHR24349">
    <property type="entry name" value="SERINE/THREONINE-PROTEIN KINASE"/>
    <property type="match status" value="1"/>
</dbReference>
<dbReference type="Pfam" id="PF13499">
    <property type="entry name" value="EF-hand_7"/>
    <property type="match status" value="2"/>
</dbReference>
<dbReference type="Pfam" id="PF00069">
    <property type="entry name" value="Pkinase"/>
    <property type="match status" value="1"/>
</dbReference>
<dbReference type="SMART" id="SM00054">
    <property type="entry name" value="EFh"/>
    <property type="match status" value="4"/>
</dbReference>
<dbReference type="SMART" id="SM00220">
    <property type="entry name" value="S_TKc"/>
    <property type="match status" value="1"/>
</dbReference>
<dbReference type="SUPFAM" id="SSF47473">
    <property type="entry name" value="EF-hand"/>
    <property type="match status" value="1"/>
</dbReference>
<dbReference type="SUPFAM" id="SSF56112">
    <property type="entry name" value="Protein kinase-like (PK-like)"/>
    <property type="match status" value="1"/>
</dbReference>
<dbReference type="PROSITE" id="PS00018">
    <property type="entry name" value="EF_HAND_1"/>
    <property type="match status" value="4"/>
</dbReference>
<dbReference type="PROSITE" id="PS50222">
    <property type="entry name" value="EF_HAND_2"/>
    <property type="match status" value="4"/>
</dbReference>
<dbReference type="PROSITE" id="PS00107">
    <property type="entry name" value="PROTEIN_KINASE_ATP"/>
    <property type="match status" value="1"/>
</dbReference>
<dbReference type="PROSITE" id="PS50011">
    <property type="entry name" value="PROTEIN_KINASE_DOM"/>
    <property type="match status" value="1"/>
</dbReference>
<dbReference type="PROSITE" id="PS00108">
    <property type="entry name" value="PROTEIN_KINASE_ST"/>
    <property type="match status" value="1"/>
</dbReference>
<organism>
    <name type="scientific">Arabidopsis thaliana</name>
    <name type="common">Mouse-ear cress</name>
    <dbReference type="NCBI Taxonomy" id="3702"/>
    <lineage>
        <taxon>Eukaryota</taxon>
        <taxon>Viridiplantae</taxon>
        <taxon>Streptophyta</taxon>
        <taxon>Embryophyta</taxon>
        <taxon>Tracheophyta</taxon>
        <taxon>Spermatophyta</taxon>
        <taxon>Magnoliopsida</taxon>
        <taxon>eudicotyledons</taxon>
        <taxon>Gunneridae</taxon>
        <taxon>Pentapetalae</taxon>
        <taxon>rosids</taxon>
        <taxon>malvids</taxon>
        <taxon>Brassicales</taxon>
        <taxon>Brassicaceae</taxon>
        <taxon>Camelineae</taxon>
        <taxon>Arabidopsis</taxon>
    </lineage>
</organism>
<name>CDPKG_ARATH</name>
<comment type="function">
    <text>May play a role in signal transduction pathways that involve calcium as a second messenger.</text>
</comment>
<comment type="catalytic activity">
    <reaction>
        <text>L-seryl-[protein] + ATP = O-phospho-L-seryl-[protein] + ADP + H(+)</text>
        <dbReference type="Rhea" id="RHEA:17989"/>
        <dbReference type="Rhea" id="RHEA-COMP:9863"/>
        <dbReference type="Rhea" id="RHEA-COMP:11604"/>
        <dbReference type="ChEBI" id="CHEBI:15378"/>
        <dbReference type="ChEBI" id="CHEBI:29999"/>
        <dbReference type="ChEBI" id="CHEBI:30616"/>
        <dbReference type="ChEBI" id="CHEBI:83421"/>
        <dbReference type="ChEBI" id="CHEBI:456216"/>
        <dbReference type="EC" id="2.7.11.1"/>
    </reaction>
</comment>
<comment type="catalytic activity">
    <reaction>
        <text>L-threonyl-[protein] + ATP = O-phospho-L-threonyl-[protein] + ADP + H(+)</text>
        <dbReference type="Rhea" id="RHEA:46608"/>
        <dbReference type="Rhea" id="RHEA-COMP:11060"/>
        <dbReference type="Rhea" id="RHEA-COMP:11605"/>
        <dbReference type="ChEBI" id="CHEBI:15378"/>
        <dbReference type="ChEBI" id="CHEBI:30013"/>
        <dbReference type="ChEBI" id="CHEBI:30616"/>
        <dbReference type="ChEBI" id="CHEBI:61977"/>
        <dbReference type="ChEBI" id="CHEBI:456216"/>
        <dbReference type="EC" id="2.7.11.1"/>
    </reaction>
</comment>
<comment type="activity regulation">
    <text evidence="1">Activated by calcium. Autophosphorylation may play an important role in the regulation of the kinase activity (By similarity).</text>
</comment>
<comment type="subcellular location">
    <subcellularLocation>
        <location evidence="6 7">Cell membrane</location>
        <topology evidence="6 9">Lipid-anchor</topology>
    </subcellularLocation>
    <subcellularLocation>
        <location evidence="7">Nucleus</location>
    </subcellularLocation>
    <text evidence="7">Predominantly localized at the plasma membrane.</text>
</comment>
<comment type="domain">
    <text evidence="1">There are 3 contiguous domains conserved in the CDPK subfamily: a kinase domain, an autoinhibitory (junction) domain and a calmodulin-like domain. The autoinhibitory domain (374-404) inactivates kinase activity under calcium-free conditions (By similarity).</text>
</comment>
<comment type="similarity">
    <text evidence="3">Belongs to the protein kinase superfamily. Ser/Thr protein kinase family. CDPK subfamily.</text>
</comment>
<accession>Q7XJR9</accession>
<proteinExistence type="evidence at protein level"/>
<gene>
    <name type="primary">CPK16</name>
    <name type="ordered locus">At2g17890</name>
    <name type="ORF">T13L16.9</name>
</gene>
<keyword id="KW-0067">ATP-binding</keyword>
<keyword id="KW-0106">Calcium</keyword>
<keyword id="KW-1003">Cell membrane</keyword>
<keyword id="KW-0418">Kinase</keyword>
<keyword id="KW-0449">Lipoprotein</keyword>
<keyword id="KW-0472">Membrane</keyword>
<keyword id="KW-0479">Metal-binding</keyword>
<keyword id="KW-0519">Myristate</keyword>
<keyword id="KW-0547">Nucleotide-binding</keyword>
<keyword id="KW-0539">Nucleus</keyword>
<keyword id="KW-0564">Palmitate</keyword>
<keyword id="KW-0597">Phosphoprotein</keyword>
<keyword id="KW-1185">Reference proteome</keyword>
<keyword id="KW-0677">Repeat</keyword>
<keyword id="KW-0723">Serine/threonine-protein kinase</keyword>
<keyword id="KW-0808">Transferase</keyword>